<sequence>MAFNIHNRNLLSLEHHTNRELRYLLDLTRDLKAK</sequence>
<name>OTCC_PSEPU</name>
<evidence type="ECO:0000269" key="1">
    <source>
    </source>
</evidence>
<evidence type="ECO:0000305" key="2"/>
<accession>P11727</accession>
<reference key="1">
    <citation type="submission" date="1994-02" db="EMBL/GenBank/DDBJ databases">
        <authorList>
            <person name="Wilson S.D."/>
            <person name="Wang M."/>
            <person name="Filpula D."/>
        </authorList>
    </citation>
    <scope>NUCLEOTIDE SEQUENCE [GENOMIC DNA] OF 1-13</scope>
    <source>
        <strain>ATCC 4359 / IAM 1506 / JCM 20188</strain>
    </source>
</reference>
<reference key="2">
    <citation type="journal article" date="1985" name="J. Bacteriol.">
        <title>Immunological and structural relatedness of catabolic ornithine carbamoyltransferases and the anabolic enzymes of enterobacteria.</title>
        <authorList>
            <person name="Falmagne P."/>
            <person name="Portetelle D."/>
            <person name="Stalon V."/>
        </authorList>
    </citation>
    <scope>PROTEIN SEQUENCE OF 2-34</scope>
</reference>
<dbReference type="EC" id="2.1.3.3"/>
<dbReference type="EMBL" id="U07185">
    <property type="protein sequence ID" value="AAA16965.1"/>
    <property type="molecule type" value="Unassigned_DNA"/>
</dbReference>
<dbReference type="PIR" id="D21897">
    <property type="entry name" value="D21897"/>
</dbReference>
<dbReference type="SMR" id="P11727"/>
<dbReference type="eggNOG" id="COG0078">
    <property type="taxonomic scope" value="Bacteria"/>
</dbReference>
<dbReference type="SABIO-RK" id="P11727"/>
<dbReference type="UniPathway" id="UPA00254">
    <property type="reaction ID" value="UER00365"/>
</dbReference>
<dbReference type="GO" id="GO:0005737">
    <property type="term" value="C:cytoplasm"/>
    <property type="evidence" value="ECO:0007669"/>
    <property type="project" value="UniProtKB-SubCell"/>
</dbReference>
<dbReference type="GO" id="GO:0004585">
    <property type="term" value="F:ornithine carbamoyltransferase activity"/>
    <property type="evidence" value="ECO:0007669"/>
    <property type="project" value="UniProtKB-EC"/>
</dbReference>
<dbReference type="GO" id="GO:0019547">
    <property type="term" value="P:arginine catabolic process to ornithine"/>
    <property type="evidence" value="ECO:0007669"/>
    <property type="project" value="UniProtKB-UniPathway"/>
</dbReference>
<gene>
    <name type="primary">arcB</name>
</gene>
<keyword id="KW-0056">Arginine metabolism</keyword>
<keyword id="KW-0963">Cytoplasm</keyword>
<keyword id="KW-0903">Direct protein sequencing</keyword>
<keyword id="KW-0808">Transferase</keyword>
<comment type="catalytic activity">
    <reaction>
        <text>carbamoyl phosphate + L-ornithine = L-citrulline + phosphate + H(+)</text>
        <dbReference type="Rhea" id="RHEA:19513"/>
        <dbReference type="ChEBI" id="CHEBI:15378"/>
        <dbReference type="ChEBI" id="CHEBI:43474"/>
        <dbReference type="ChEBI" id="CHEBI:46911"/>
        <dbReference type="ChEBI" id="CHEBI:57743"/>
        <dbReference type="ChEBI" id="CHEBI:58228"/>
        <dbReference type="EC" id="2.1.3.3"/>
    </reaction>
</comment>
<comment type="pathway">
    <text>Amino-acid degradation; L-arginine degradation via ADI pathway; carbamoyl phosphate from L-arginine: step 2/2.</text>
</comment>
<comment type="subunit">
    <text>Probably nonameric or dodecameric.</text>
</comment>
<comment type="subcellular location">
    <subcellularLocation>
        <location evidence="2">Cytoplasm</location>
    </subcellularLocation>
</comment>
<comment type="similarity">
    <text evidence="2">Belongs to the aspartate/ornithine carbamoyltransferase superfamily. OTCase family.</text>
</comment>
<proteinExistence type="evidence at protein level"/>
<feature type="initiator methionine" description="Removed" evidence="1">
    <location>
        <position position="1"/>
    </location>
</feature>
<feature type="chain" id="PRO_0000112990" description="Ornithine carbamoyltransferase, catabolic">
    <location>
        <begin position="2"/>
        <end position="34" status="greater than"/>
    </location>
</feature>
<feature type="non-terminal residue">
    <location>
        <position position="34"/>
    </location>
</feature>
<protein>
    <recommendedName>
        <fullName>Ornithine carbamoyltransferase, catabolic</fullName>
        <shortName>OTCase</shortName>
        <ecNumber>2.1.3.3</ecNumber>
    </recommendedName>
</protein>
<organism>
    <name type="scientific">Pseudomonas putida</name>
    <name type="common">Arthrobacter siderocapsulatus</name>
    <dbReference type="NCBI Taxonomy" id="303"/>
    <lineage>
        <taxon>Bacteria</taxon>
        <taxon>Pseudomonadati</taxon>
        <taxon>Pseudomonadota</taxon>
        <taxon>Gammaproteobacteria</taxon>
        <taxon>Pseudomonadales</taxon>
        <taxon>Pseudomonadaceae</taxon>
        <taxon>Pseudomonas</taxon>
    </lineage>
</organism>